<name>YPT4_SCHPO</name>
<protein>
    <recommendedName>
        <fullName>GTP-binding protein ypt4</fullName>
    </recommendedName>
</protein>
<sequence length="234" mass="26269">MDKESYDYLVKIVLAGPSGTGKSCLLQRFVKNQWDDQVSHTVGIDFASRIISVGMGNQQKRIKLQIWDTAGQEKFRSVARNYYRGAAGAVLVYDVTNKDSFEELSSWLSDIRAMAPSTICVVLAGSKSDLQNQRQVSTEEAAEFCSEKHISSAHETSSYTGSNVEECFLSVVSTIITRIELGEIDPQDQSLGIQYGDLSFRRPVHPSSTSNWWTSITNWDDLVRLERQTRSYCC</sequence>
<keyword id="KW-1003">Cell membrane</keyword>
<keyword id="KW-0342">GTP-binding</keyword>
<keyword id="KW-0449">Lipoprotein</keyword>
<keyword id="KW-0472">Membrane</keyword>
<keyword id="KW-0547">Nucleotide-binding</keyword>
<keyword id="KW-0636">Prenylation</keyword>
<keyword id="KW-0653">Protein transport</keyword>
<keyword id="KW-1185">Reference proteome</keyword>
<keyword id="KW-0813">Transport</keyword>
<gene>
    <name type="primary">ypt4</name>
    <name type="ORF">SPAC1B3.11c</name>
</gene>
<accession>O13876</accession>
<reference key="1">
    <citation type="journal article" date="2002" name="Nature">
        <title>The genome sequence of Schizosaccharomyces pombe.</title>
        <authorList>
            <person name="Wood V."/>
            <person name="Gwilliam R."/>
            <person name="Rajandream M.A."/>
            <person name="Lyne M.H."/>
            <person name="Lyne R."/>
            <person name="Stewart A."/>
            <person name="Sgouros J.G."/>
            <person name="Peat N."/>
            <person name="Hayles J."/>
            <person name="Baker S.G."/>
            <person name="Basham D."/>
            <person name="Bowman S."/>
            <person name="Brooks K."/>
            <person name="Brown D."/>
            <person name="Brown S."/>
            <person name="Chillingworth T."/>
            <person name="Churcher C.M."/>
            <person name="Collins M."/>
            <person name="Connor R."/>
            <person name="Cronin A."/>
            <person name="Davis P."/>
            <person name="Feltwell T."/>
            <person name="Fraser A."/>
            <person name="Gentles S."/>
            <person name="Goble A."/>
            <person name="Hamlin N."/>
            <person name="Harris D.E."/>
            <person name="Hidalgo J."/>
            <person name="Hodgson G."/>
            <person name="Holroyd S."/>
            <person name="Hornsby T."/>
            <person name="Howarth S."/>
            <person name="Huckle E.J."/>
            <person name="Hunt S."/>
            <person name="Jagels K."/>
            <person name="James K.D."/>
            <person name="Jones L."/>
            <person name="Jones M."/>
            <person name="Leather S."/>
            <person name="McDonald S."/>
            <person name="McLean J."/>
            <person name="Mooney P."/>
            <person name="Moule S."/>
            <person name="Mungall K.L."/>
            <person name="Murphy L.D."/>
            <person name="Niblett D."/>
            <person name="Odell C."/>
            <person name="Oliver K."/>
            <person name="O'Neil S."/>
            <person name="Pearson D."/>
            <person name="Quail M.A."/>
            <person name="Rabbinowitsch E."/>
            <person name="Rutherford K.M."/>
            <person name="Rutter S."/>
            <person name="Saunders D."/>
            <person name="Seeger K."/>
            <person name="Sharp S."/>
            <person name="Skelton J."/>
            <person name="Simmonds M.N."/>
            <person name="Squares R."/>
            <person name="Squares S."/>
            <person name="Stevens K."/>
            <person name="Taylor K."/>
            <person name="Taylor R.G."/>
            <person name="Tivey A."/>
            <person name="Walsh S.V."/>
            <person name="Warren T."/>
            <person name="Whitehead S."/>
            <person name="Woodward J.R."/>
            <person name="Volckaert G."/>
            <person name="Aert R."/>
            <person name="Robben J."/>
            <person name="Grymonprez B."/>
            <person name="Weltjens I."/>
            <person name="Vanstreels E."/>
            <person name="Rieger M."/>
            <person name="Schaefer M."/>
            <person name="Mueller-Auer S."/>
            <person name="Gabel C."/>
            <person name="Fuchs M."/>
            <person name="Duesterhoeft A."/>
            <person name="Fritzc C."/>
            <person name="Holzer E."/>
            <person name="Moestl D."/>
            <person name="Hilbert H."/>
            <person name="Borzym K."/>
            <person name="Langer I."/>
            <person name="Beck A."/>
            <person name="Lehrach H."/>
            <person name="Reinhardt R."/>
            <person name="Pohl T.M."/>
            <person name="Eger P."/>
            <person name="Zimmermann W."/>
            <person name="Wedler H."/>
            <person name="Wambutt R."/>
            <person name="Purnelle B."/>
            <person name="Goffeau A."/>
            <person name="Cadieu E."/>
            <person name="Dreano S."/>
            <person name="Gloux S."/>
            <person name="Lelaure V."/>
            <person name="Mottier S."/>
            <person name="Galibert F."/>
            <person name="Aves S.J."/>
            <person name="Xiang Z."/>
            <person name="Hunt C."/>
            <person name="Moore K."/>
            <person name="Hurst S.M."/>
            <person name="Lucas M."/>
            <person name="Rochet M."/>
            <person name="Gaillardin C."/>
            <person name="Tallada V.A."/>
            <person name="Garzon A."/>
            <person name="Thode G."/>
            <person name="Daga R.R."/>
            <person name="Cruzado L."/>
            <person name="Jimenez J."/>
            <person name="Sanchez M."/>
            <person name="del Rey F."/>
            <person name="Benito J."/>
            <person name="Dominguez A."/>
            <person name="Revuelta J.L."/>
            <person name="Moreno S."/>
            <person name="Armstrong J."/>
            <person name="Forsburg S.L."/>
            <person name="Cerutti L."/>
            <person name="Lowe T."/>
            <person name="McCombie W.R."/>
            <person name="Paulsen I."/>
            <person name="Potashkin J."/>
            <person name="Shpakovski G.V."/>
            <person name="Ussery D."/>
            <person name="Barrell B.G."/>
            <person name="Nurse P."/>
        </authorList>
    </citation>
    <scope>NUCLEOTIDE SEQUENCE [LARGE SCALE GENOMIC DNA]</scope>
    <source>
        <strain>972 / ATCC 24843</strain>
    </source>
</reference>
<feature type="chain" id="PRO_0000121311" description="GTP-binding protein ypt4">
    <location>
        <begin position="1"/>
        <end position="234"/>
    </location>
</feature>
<feature type="short sequence motif" description="Effector region" evidence="1">
    <location>
        <begin position="39"/>
        <end position="47"/>
    </location>
</feature>
<feature type="binding site" evidence="2">
    <location>
        <begin position="16"/>
        <end position="23"/>
    </location>
    <ligand>
        <name>GTP</name>
        <dbReference type="ChEBI" id="CHEBI:37565"/>
    </ligand>
</feature>
<feature type="binding site" evidence="2">
    <location>
        <begin position="68"/>
        <end position="72"/>
    </location>
    <ligand>
        <name>GTP</name>
        <dbReference type="ChEBI" id="CHEBI:37565"/>
    </ligand>
</feature>
<feature type="lipid moiety-binding region" description="S-geranylgeranyl cysteine" evidence="1">
    <location>
        <position position="233"/>
    </location>
</feature>
<feature type="lipid moiety-binding region" description="S-geranylgeranyl cysteine" evidence="1">
    <location>
        <position position="234"/>
    </location>
</feature>
<evidence type="ECO:0000250" key="1"/>
<evidence type="ECO:0000255" key="2"/>
<evidence type="ECO:0000305" key="3"/>
<comment type="subcellular location">
    <subcellularLocation>
        <location evidence="3">Cell membrane</location>
        <topology evidence="3">Lipid-anchor</topology>
        <orientation evidence="3">Cytoplasmic side</orientation>
    </subcellularLocation>
</comment>
<comment type="similarity">
    <text evidence="3">Belongs to the small GTPase superfamily. Rab family.</text>
</comment>
<proteinExistence type="inferred from homology"/>
<organism>
    <name type="scientific">Schizosaccharomyces pombe (strain 972 / ATCC 24843)</name>
    <name type="common">Fission yeast</name>
    <dbReference type="NCBI Taxonomy" id="284812"/>
    <lineage>
        <taxon>Eukaryota</taxon>
        <taxon>Fungi</taxon>
        <taxon>Dikarya</taxon>
        <taxon>Ascomycota</taxon>
        <taxon>Taphrinomycotina</taxon>
        <taxon>Schizosaccharomycetes</taxon>
        <taxon>Schizosaccharomycetales</taxon>
        <taxon>Schizosaccharomycetaceae</taxon>
        <taxon>Schizosaccharomyces</taxon>
    </lineage>
</organism>
<dbReference type="EMBL" id="CU329670">
    <property type="protein sequence ID" value="CAB11239.1"/>
    <property type="molecule type" value="Genomic_DNA"/>
</dbReference>
<dbReference type="PIR" id="T38030">
    <property type="entry name" value="T38030"/>
</dbReference>
<dbReference type="RefSeq" id="NP_594796.1">
    <property type="nucleotide sequence ID" value="NM_001020224.2"/>
</dbReference>
<dbReference type="SMR" id="O13876"/>
<dbReference type="BioGRID" id="278589">
    <property type="interactions" value="11"/>
</dbReference>
<dbReference type="FunCoup" id="O13876">
    <property type="interactions" value="529"/>
</dbReference>
<dbReference type="STRING" id="284812.O13876"/>
<dbReference type="PaxDb" id="4896-SPAC1B3.11c.1"/>
<dbReference type="EnsemblFungi" id="SPAC1B3.11c.1">
    <property type="protein sequence ID" value="SPAC1B3.11c.1:pep"/>
    <property type="gene ID" value="SPAC1B3.11c"/>
</dbReference>
<dbReference type="GeneID" id="2542113"/>
<dbReference type="KEGG" id="spo:2542113"/>
<dbReference type="PomBase" id="SPAC1B3.11c">
    <property type="gene designation" value="ypt4"/>
</dbReference>
<dbReference type="VEuPathDB" id="FungiDB:SPAC1B3.11c"/>
<dbReference type="eggNOG" id="KOG0086">
    <property type="taxonomic scope" value="Eukaryota"/>
</dbReference>
<dbReference type="HOGENOM" id="CLU_041217_23_1_1"/>
<dbReference type="InParanoid" id="O13876"/>
<dbReference type="OMA" id="ASQNICI"/>
<dbReference type="PhylomeDB" id="O13876"/>
<dbReference type="Reactome" id="R-SPO-6798695">
    <property type="pathway name" value="Neutrophil degranulation"/>
</dbReference>
<dbReference type="Reactome" id="R-SPO-8873719">
    <property type="pathway name" value="RAB geranylgeranylation"/>
</dbReference>
<dbReference type="Reactome" id="R-SPO-8876198">
    <property type="pathway name" value="RAB GEFs exchange GTP for GDP on RABs"/>
</dbReference>
<dbReference type="PRO" id="PR:O13876"/>
<dbReference type="Proteomes" id="UP000002485">
    <property type="component" value="Chromosome I"/>
</dbReference>
<dbReference type="GO" id="GO:0005829">
    <property type="term" value="C:cytosol"/>
    <property type="evidence" value="ECO:0007005"/>
    <property type="project" value="PomBase"/>
</dbReference>
<dbReference type="GO" id="GO:0016020">
    <property type="term" value="C:membrane"/>
    <property type="evidence" value="ECO:0000318"/>
    <property type="project" value="GO_Central"/>
</dbReference>
<dbReference type="GO" id="GO:0005634">
    <property type="term" value="C:nucleus"/>
    <property type="evidence" value="ECO:0007005"/>
    <property type="project" value="PomBase"/>
</dbReference>
<dbReference type="GO" id="GO:0005886">
    <property type="term" value="C:plasma membrane"/>
    <property type="evidence" value="ECO:0007669"/>
    <property type="project" value="UniProtKB-SubCell"/>
</dbReference>
<dbReference type="GO" id="GO:0005525">
    <property type="term" value="F:GTP binding"/>
    <property type="evidence" value="ECO:0000255"/>
    <property type="project" value="PomBase"/>
</dbReference>
<dbReference type="GO" id="GO:0003924">
    <property type="term" value="F:GTPase activity"/>
    <property type="evidence" value="ECO:0000318"/>
    <property type="project" value="GO_Central"/>
</dbReference>
<dbReference type="GO" id="GO:0006887">
    <property type="term" value="P:exocytosis"/>
    <property type="evidence" value="ECO:0000318"/>
    <property type="project" value="GO_Central"/>
</dbReference>
<dbReference type="GO" id="GO:0015031">
    <property type="term" value="P:protein transport"/>
    <property type="evidence" value="ECO:0007669"/>
    <property type="project" value="UniProtKB-KW"/>
</dbReference>
<dbReference type="GO" id="GO:0033157">
    <property type="term" value="P:regulation of intracellular protein transport"/>
    <property type="evidence" value="ECO:0000305"/>
    <property type="project" value="PomBase"/>
</dbReference>
<dbReference type="GO" id="GO:0060627">
    <property type="term" value="P:regulation of vesicle-mediated transport"/>
    <property type="evidence" value="ECO:0000255"/>
    <property type="project" value="PomBase"/>
</dbReference>
<dbReference type="GO" id="GO:0023052">
    <property type="term" value="P:signaling"/>
    <property type="evidence" value="ECO:0000303"/>
    <property type="project" value="PomBase"/>
</dbReference>
<dbReference type="GO" id="GO:0007033">
    <property type="term" value="P:vacuole organization"/>
    <property type="evidence" value="ECO:0000315"/>
    <property type="project" value="PomBase"/>
</dbReference>
<dbReference type="CDD" id="cd00154">
    <property type="entry name" value="Rab"/>
    <property type="match status" value="1"/>
</dbReference>
<dbReference type="FunFam" id="3.40.50.300:FF:001072">
    <property type="entry name" value="Rab family GTPase"/>
    <property type="match status" value="1"/>
</dbReference>
<dbReference type="Gene3D" id="3.40.50.300">
    <property type="entry name" value="P-loop containing nucleotide triphosphate hydrolases"/>
    <property type="match status" value="1"/>
</dbReference>
<dbReference type="InterPro" id="IPR027417">
    <property type="entry name" value="P-loop_NTPase"/>
</dbReference>
<dbReference type="InterPro" id="IPR050209">
    <property type="entry name" value="Rab_GTPases_membrane_traffic"/>
</dbReference>
<dbReference type="InterPro" id="IPR005225">
    <property type="entry name" value="Small_GTP-bd"/>
</dbReference>
<dbReference type="InterPro" id="IPR001806">
    <property type="entry name" value="Small_GTPase"/>
</dbReference>
<dbReference type="NCBIfam" id="TIGR00231">
    <property type="entry name" value="small_GTP"/>
    <property type="match status" value="1"/>
</dbReference>
<dbReference type="PANTHER" id="PTHR47979">
    <property type="entry name" value="DRAB11-RELATED"/>
    <property type="match status" value="1"/>
</dbReference>
<dbReference type="Pfam" id="PF00071">
    <property type="entry name" value="Ras"/>
    <property type="match status" value="1"/>
</dbReference>
<dbReference type="PRINTS" id="PR00449">
    <property type="entry name" value="RASTRNSFRMNG"/>
</dbReference>
<dbReference type="SMART" id="SM00175">
    <property type="entry name" value="RAB"/>
    <property type="match status" value="1"/>
</dbReference>
<dbReference type="SMART" id="SM00176">
    <property type="entry name" value="RAN"/>
    <property type="match status" value="1"/>
</dbReference>
<dbReference type="SMART" id="SM00173">
    <property type="entry name" value="RAS"/>
    <property type="match status" value="1"/>
</dbReference>
<dbReference type="SMART" id="SM00174">
    <property type="entry name" value="RHO"/>
    <property type="match status" value="1"/>
</dbReference>
<dbReference type="SUPFAM" id="SSF52540">
    <property type="entry name" value="P-loop containing nucleoside triphosphate hydrolases"/>
    <property type="match status" value="1"/>
</dbReference>
<dbReference type="PROSITE" id="PS51419">
    <property type="entry name" value="RAB"/>
    <property type="match status" value="1"/>
</dbReference>